<name>RL1_GEOMG</name>
<organism>
    <name type="scientific">Geobacter metallireducens (strain ATCC 53774 / DSM 7210 / GS-15)</name>
    <dbReference type="NCBI Taxonomy" id="269799"/>
    <lineage>
        <taxon>Bacteria</taxon>
        <taxon>Pseudomonadati</taxon>
        <taxon>Thermodesulfobacteriota</taxon>
        <taxon>Desulfuromonadia</taxon>
        <taxon>Geobacterales</taxon>
        <taxon>Geobacteraceae</taxon>
        <taxon>Geobacter</taxon>
    </lineage>
</organism>
<proteinExistence type="inferred from homology"/>
<sequence>MPKTAKKHREALAKIDRSRTYPLVEGIESVKSVAYAKFDETVEVAVRLGVDPRHADQMVRGAVVLPNGLGKDVRVLVFAKGEKEKEARDAGADHVGAEDLVAKIQEGWFDFDTAIATPDMMGVVGKIGKLLGPRGLMPNPKVGTVTFDVGRAVKESKAGKVEFRVEKAGIVHAPVGKASFDADKLKENLLALVEALVKAKPSAAKGTYIKKISLSSTMGPGLNLDIADVQSKLV</sequence>
<gene>
    <name evidence="1" type="primary">rplA</name>
    <name type="ordered locus">Gmet_0616</name>
</gene>
<reference key="1">
    <citation type="journal article" date="2009" name="BMC Microbiol.">
        <title>The genome sequence of Geobacter metallireducens: features of metabolism, physiology and regulation common and dissimilar to Geobacter sulfurreducens.</title>
        <authorList>
            <person name="Aklujkar M."/>
            <person name="Krushkal J."/>
            <person name="DiBartolo G."/>
            <person name="Lapidus A."/>
            <person name="Land M.L."/>
            <person name="Lovley D.R."/>
        </authorList>
    </citation>
    <scope>NUCLEOTIDE SEQUENCE [LARGE SCALE GENOMIC DNA]</scope>
    <source>
        <strain>ATCC 53774 / DSM 7210 / GS-15</strain>
    </source>
</reference>
<keyword id="KW-1185">Reference proteome</keyword>
<keyword id="KW-0678">Repressor</keyword>
<keyword id="KW-0687">Ribonucleoprotein</keyword>
<keyword id="KW-0689">Ribosomal protein</keyword>
<keyword id="KW-0694">RNA-binding</keyword>
<keyword id="KW-0699">rRNA-binding</keyword>
<keyword id="KW-0810">Translation regulation</keyword>
<keyword id="KW-0820">tRNA-binding</keyword>
<evidence type="ECO:0000255" key="1">
    <source>
        <dbReference type="HAMAP-Rule" id="MF_01318"/>
    </source>
</evidence>
<evidence type="ECO:0000305" key="2"/>
<accession>Q39Y16</accession>
<feature type="chain" id="PRO_0000230608" description="Large ribosomal subunit protein uL1">
    <location>
        <begin position="1"/>
        <end position="234"/>
    </location>
</feature>
<protein>
    <recommendedName>
        <fullName evidence="1">Large ribosomal subunit protein uL1</fullName>
    </recommendedName>
    <alternativeName>
        <fullName evidence="2">50S ribosomal protein L1</fullName>
    </alternativeName>
</protein>
<comment type="function">
    <text evidence="1">Binds directly to 23S rRNA. The L1 stalk is quite mobile in the ribosome, and is involved in E site tRNA release.</text>
</comment>
<comment type="function">
    <text evidence="1">Protein L1 is also a translational repressor protein, it controls the translation of the L11 operon by binding to its mRNA.</text>
</comment>
<comment type="subunit">
    <text evidence="1">Part of the 50S ribosomal subunit.</text>
</comment>
<comment type="similarity">
    <text evidence="1">Belongs to the universal ribosomal protein uL1 family.</text>
</comment>
<dbReference type="EMBL" id="CP000148">
    <property type="protein sequence ID" value="ABB30858.1"/>
    <property type="molecule type" value="Genomic_DNA"/>
</dbReference>
<dbReference type="RefSeq" id="WP_004514632.1">
    <property type="nucleotide sequence ID" value="NC_007517.1"/>
</dbReference>
<dbReference type="SMR" id="Q39Y16"/>
<dbReference type="STRING" id="269799.Gmet_0616"/>
<dbReference type="KEGG" id="gme:Gmet_0616"/>
<dbReference type="eggNOG" id="COG0081">
    <property type="taxonomic scope" value="Bacteria"/>
</dbReference>
<dbReference type="HOGENOM" id="CLU_062853_0_0_7"/>
<dbReference type="Proteomes" id="UP000007073">
    <property type="component" value="Chromosome"/>
</dbReference>
<dbReference type="GO" id="GO:0022625">
    <property type="term" value="C:cytosolic large ribosomal subunit"/>
    <property type="evidence" value="ECO:0007669"/>
    <property type="project" value="TreeGrafter"/>
</dbReference>
<dbReference type="GO" id="GO:0019843">
    <property type="term" value="F:rRNA binding"/>
    <property type="evidence" value="ECO:0007669"/>
    <property type="project" value="UniProtKB-UniRule"/>
</dbReference>
<dbReference type="GO" id="GO:0003735">
    <property type="term" value="F:structural constituent of ribosome"/>
    <property type="evidence" value="ECO:0007669"/>
    <property type="project" value="InterPro"/>
</dbReference>
<dbReference type="GO" id="GO:0000049">
    <property type="term" value="F:tRNA binding"/>
    <property type="evidence" value="ECO:0007669"/>
    <property type="project" value="UniProtKB-KW"/>
</dbReference>
<dbReference type="GO" id="GO:0006417">
    <property type="term" value="P:regulation of translation"/>
    <property type="evidence" value="ECO:0007669"/>
    <property type="project" value="UniProtKB-KW"/>
</dbReference>
<dbReference type="GO" id="GO:0006412">
    <property type="term" value="P:translation"/>
    <property type="evidence" value="ECO:0007669"/>
    <property type="project" value="UniProtKB-UniRule"/>
</dbReference>
<dbReference type="CDD" id="cd00403">
    <property type="entry name" value="Ribosomal_L1"/>
    <property type="match status" value="1"/>
</dbReference>
<dbReference type="FunFam" id="3.40.50.790:FF:000001">
    <property type="entry name" value="50S ribosomal protein L1"/>
    <property type="match status" value="1"/>
</dbReference>
<dbReference type="Gene3D" id="3.30.190.20">
    <property type="match status" value="1"/>
</dbReference>
<dbReference type="Gene3D" id="3.40.50.790">
    <property type="match status" value="1"/>
</dbReference>
<dbReference type="HAMAP" id="MF_01318_B">
    <property type="entry name" value="Ribosomal_uL1_B"/>
    <property type="match status" value="1"/>
</dbReference>
<dbReference type="InterPro" id="IPR005878">
    <property type="entry name" value="Ribosom_uL1_bac-type"/>
</dbReference>
<dbReference type="InterPro" id="IPR002143">
    <property type="entry name" value="Ribosomal_uL1"/>
</dbReference>
<dbReference type="InterPro" id="IPR023674">
    <property type="entry name" value="Ribosomal_uL1-like"/>
</dbReference>
<dbReference type="InterPro" id="IPR028364">
    <property type="entry name" value="Ribosomal_uL1/biogenesis"/>
</dbReference>
<dbReference type="InterPro" id="IPR016095">
    <property type="entry name" value="Ribosomal_uL1_3-a/b-sand"/>
</dbReference>
<dbReference type="InterPro" id="IPR023673">
    <property type="entry name" value="Ribosomal_uL1_CS"/>
</dbReference>
<dbReference type="NCBIfam" id="TIGR01169">
    <property type="entry name" value="rplA_bact"/>
    <property type="match status" value="1"/>
</dbReference>
<dbReference type="PANTHER" id="PTHR36427">
    <property type="entry name" value="54S RIBOSOMAL PROTEIN L1, MITOCHONDRIAL"/>
    <property type="match status" value="1"/>
</dbReference>
<dbReference type="PANTHER" id="PTHR36427:SF3">
    <property type="entry name" value="LARGE RIBOSOMAL SUBUNIT PROTEIN UL1M"/>
    <property type="match status" value="1"/>
</dbReference>
<dbReference type="Pfam" id="PF00687">
    <property type="entry name" value="Ribosomal_L1"/>
    <property type="match status" value="1"/>
</dbReference>
<dbReference type="PIRSF" id="PIRSF002155">
    <property type="entry name" value="Ribosomal_L1"/>
    <property type="match status" value="1"/>
</dbReference>
<dbReference type="SUPFAM" id="SSF56808">
    <property type="entry name" value="Ribosomal protein L1"/>
    <property type="match status" value="1"/>
</dbReference>
<dbReference type="PROSITE" id="PS01199">
    <property type="entry name" value="RIBOSOMAL_L1"/>
    <property type="match status" value="1"/>
</dbReference>